<comment type="function">
    <text evidence="1">Catalyzes the ATP-dependent phosphorylation of L-homoserine to L-homoserine phosphate.</text>
</comment>
<comment type="catalytic activity">
    <reaction evidence="1">
        <text>L-homoserine + ATP = O-phospho-L-homoserine + ADP + H(+)</text>
        <dbReference type="Rhea" id="RHEA:13985"/>
        <dbReference type="ChEBI" id="CHEBI:15378"/>
        <dbReference type="ChEBI" id="CHEBI:30616"/>
        <dbReference type="ChEBI" id="CHEBI:57476"/>
        <dbReference type="ChEBI" id="CHEBI:57590"/>
        <dbReference type="ChEBI" id="CHEBI:456216"/>
        <dbReference type="EC" id="2.7.1.39"/>
    </reaction>
</comment>
<comment type="pathway">
    <text evidence="1">Amino-acid biosynthesis; L-threonine biosynthesis; L-threonine from L-aspartate: step 4/5.</text>
</comment>
<comment type="subcellular location">
    <subcellularLocation>
        <location evidence="1">Cytoplasm</location>
    </subcellularLocation>
</comment>
<comment type="similarity">
    <text evidence="1">Belongs to the GHMP kinase family. Homoserine kinase subfamily.</text>
</comment>
<protein>
    <recommendedName>
        <fullName evidence="1">Homoserine kinase</fullName>
        <shortName evidence="1">HK</shortName>
        <shortName evidence="1">HSK</shortName>
        <ecNumber evidence="1">2.7.1.39</ecNumber>
    </recommendedName>
</protein>
<accession>A7Z8E0</accession>
<name>KHSE_BACVZ</name>
<sequence length="309" mass="33304">MNEAEMLFSITVPGSTANLGPGFDSVGMALSRYLKLSVFRNDEWQFSAETETVAGIPQGTDNLIYQVAKRTADRYQKELPPAHVKVWSDIPLARGLGSSAAAIVAAIELADELCGLQLSESDKLHLASLEEGHPDNAAASLAGGLVIGLHEEGETHIVRVAEADIDVVAVIPFYEVLTRDARDVLPKELPYRHAVKASAVSNLLVAAIMSNDWALAGKMMRKDILHQPYRAMLVPELSKVEHAAEMKGAYGTALSGAGPTILVLIEKGKGEELRKQLSEHFPHCEIAALTVPSEGSVIERNPLEQVKSV</sequence>
<organism>
    <name type="scientific">Bacillus velezensis (strain DSM 23117 / BGSC 10A6 / LMG 26770 / FZB42)</name>
    <name type="common">Bacillus amyloliquefaciens subsp. plantarum</name>
    <dbReference type="NCBI Taxonomy" id="326423"/>
    <lineage>
        <taxon>Bacteria</taxon>
        <taxon>Bacillati</taxon>
        <taxon>Bacillota</taxon>
        <taxon>Bacilli</taxon>
        <taxon>Bacillales</taxon>
        <taxon>Bacillaceae</taxon>
        <taxon>Bacillus</taxon>
        <taxon>Bacillus amyloliquefaciens group</taxon>
    </lineage>
</organism>
<reference key="1">
    <citation type="journal article" date="2007" name="Nat. Biotechnol.">
        <title>Comparative analysis of the complete genome sequence of the plant growth-promoting bacterium Bacillus amyloliquefaciens FZB42.</title>
        <authorList>
            <person name="Chen X.H."/>
            <person name="Koumoutsi A."/>
            <person name="Scholz R."/>
            <person name="Eisenreich A."/>
            <person name="Schneider K."/>
            <person name="Heinemeyer I."/>
            <person name="Morgenstern B."/>
            <person name="Voss B."/>
            <person name="Hess W.R."/>
            <person name="Reva O."/>
            <person name="Junge H."/>
            <person name="Voigt B."/>
            <person name="Jungblut P.R."/>
            <person name="Vater J."/>
            <person name="Suessmuth R."/>
            <person name="Liesegang H."/>
            <person name="Strittmatter A."/>
            <person name="Gottschalk G."/>
            <person name="Borriss R."/>
        </authorList>
    </citation>
    <scope>NUCLEOTIDE SEQUENCE [LARGE SCALE GENOMIC DNA]</scope>
    <source>
        <strain>DSM 23117 / BGSC 10A6 / LMG 26770 / FZB42</strain>
    </source>
</reference>
<feature type="chain" id="PRO_1000049107" description="Homoserine kinase">
    <location>
        <begin position="1"/>
        <end position="309"/>
    </location>
</feature>
<feature type="binding site" evidence="1">
    <location>
        <begin position="91"/>
        <end position="101"/>
    </location>
    <ligand>
        <name>ATP</name>
        <dbReference type="ChEBI" id="CHEBI:30616"/>
    </ligand>
</feature>
<dbReference type="EC" id="2.7.1.39" evidence="1"/>
<dbReference type="EMBL" id="CP000560">
    <property type="protein sequence ID" value="ABS75266.1"/>
    <property type="molecule type" value="Genomic_DNA"/>
</dbReference>
<dbReference type="RefSeq" id="WP_012118350.1">
    <property type="nucleotide sequence ID" value="NC_009725.2"/>
</dbReference>
<dbReference type="SMR" id="A7Z8E0"/>
<dbReference type="GeneID" id="93082079"/>
<dbReference type="KEGG" id="bay:RBAM_029350"/>
<dbReference type="HOGENOM" id="CLU_041243_0_0_9"/>
<dbReference type="UniPathway" id="UPA00050">
    <property type="reaction ID" value="UER00064"/>
</dbReference>
<dbReference type="Proteomes" id="UP000001120">
    <property type="component" value="Chromosome"/>
</dbReference>
<dbReference type="GO" id="GO:0005737">
    <property type="term" value="C:cytoplasm"/>
    <property type="evidence" value="ECO:0007669"/>
    <property type="project" value="UniProtKB-SubCell"/>
</dbReference>
<dbReference type="GO" id="GO:0005524">
    <property type="term" value="F:ATP binding"/>
    <property type="evidence" value="ECO:0007669"/>
    <property type="project" value="UniProtKB-UniRule"/>
</dbReference>
<dbReference type="GO" id="GO:0004413">
    <property type="term" value="F:homoserine kinase activity"/>
    <property type="evidence" value="ECO:0007669"/>
    <property type="project" value="UniProtKB-UniRule"/>
</dbReference>
<dbReference type="GO" id="GO:0009088">
    <property type="term" value="P:threonine biosynthetic process"/>
    <property type="evidence" value="ECO:0007669"/>
    <property type="project" value="UniProtKB-UniRule"/>
</dbReference>
<dbReference type="Gene3D" id="3.30.230.10">
    <property type="match status" value="1"/>
</dbReference>
<dbReference type="Gene3D" id="3.30.70.890">
    <property type="entry name" value="GHMP kinase, C-terminal domain"/>
    <property type="match status" value="1"/>
</dbReference>
<dbReference type="HAMAP" id="MF_00384">
    <property type="entry name" value="Homoser_kinase"/>
    <property type="match status" value="1"/>
</dbReference>
<dbReference type="InterPro" id="IPR013750">
    <property type="entry name" value="GHMP_kinase_C_dom"/>
</dbReference>
<dbReference type="InterPro" id="IPR036554">
    <property type="entry name" value="GHMP_kinase_C_sf"/>
</dbReference>
<dbReference type="InterPro" id="IPR006204">
    <property type="entry name" value="GHMP_kinase_N_dom"/>
</dbReference>
<dbReference type="InterPro" id="IPR006203">
    <property type="entry name" value="GHMP_knse_ATP-bd_CS"/>
</dbReference>
<dbReference type="InterPro" id="IPR000870">
    <property type="entry name" value="Homoserine_kinase"/>
</dbReference>
<dbReference type="InterPro" id="IPR020568">
    <property type="entry name" value="Ribosomal_Su5_D2-typ_SF"/>
</dbReference>
<dbReference type="InterPro" id="IPR014721">
    <property type="entry name" value="Ribsml_uS5_D2-typ_fold_subgr"/>
</dbReference>
<dbReference type="NCBIfam" id="TIGR00191">
    <property type="entry name" value="thrB"/>
    <property type="match status" value="1"/>
</dbReference>
<dbReference type="PANTHER" id="PTHR20861:SF1">
    <property type="entry name" value="HOMOSERINE KINASE"/>
    <property type="match status" value="1"/>
</dbReference>
<dbReference type="PANTHER" id="PTHR20861">
    <property type="entry name" value="HOMOSERINE/4-DIPHOSPHOCYTIDYL-2-C-METHYL-D-ERYTHRITOL KINASE"/>
    <property type="match status" value="1"/>
</dbReference>
<dbReference type="Pfam" id="PF08544">
    <property type="entry name" value="GHMP_kinases_C"/>
    <property type="match status" value="1"/>
</dbReference>
<dbReference type="Pfam" id="PF00288">
    <property type="entry name" value="GHMP_kinases_N"/>
    <property type="match status" value="1"/>
</dbReference>
<dbReference type="PIRSF" id="PIRSF000676">
    <property type="entry name" value="Homoser_kin"/>
    <property type="match status" value="1"/>
</dbReference>
<dbReference type="PRINTS" id="PR00958">
    <property type="entry name" value="HOMSERKINASE"/>
</dbReference>
<dbReference type="SUPFAM" id="SSF55060">
    <property type="entry name" value="GHMP Kinase, C-terminal domain"/>
    <property type="match status" value="1"/>
</dbReference>
<dbReference type="SUPFAM" id="SSF54211">
    <property type="entry name" value="Ribosomal protein S5 domain 2-like"/>
    <property type="match status" value="1"/>
</dbReference>
<dbReference type="PROSITE" id="PS00627">
    <property type="entry name" value="GHMP_KINASES_ATP"/>
    <property type="match status" value="1"/>
</dbReference>
<gene>
    <name evidence="1" type="primary">thrB</name>
    <name type="ordered locus">RBAM_029350</name>
</gene>
<evidence type="ECO:0000255" key="1">
    <source>
        <dbReference type="HAMAP-Rule" id="MF_00384"/>
    </source>
</evidence>
<keyword id="KW-0028">Amino-acid biosynthesis</keyword>
<keyword id="KW-0067">ATP-binding</keyword>
<keyword id="KW-0963">Cytoplasm</keyword>
<keyword id="KW-0418">Kinase</keyword>
<keyword id="KW-0547">Nucleotide-binding</keyword>
<keyword id="KW-0791">Threonine biosynthesis</keyword>
<keyword id="KW-0808">Transferase</keyword>
<proteinExistence type="inferred from homology"/>